<keyword id="KW-0002">3D-structure</keyword>
<keyword id="KW-0007">Acetylation</keyword>
<keyword id="KW-0025">Alternative splicing</keyword>
<keyword id="KW-0053">Apoptosis</keyword>
<keyword id="KW-0067">ATP-binding</keyword>
<keyword id="KW-0175">Coiled coil</keyword>
<keyword id="KW-0963">Cytoplasm</keyword>
<keyword id="KW-0418">Kinase</keyword>
<keyword id="KW-0460">Magnesium</keyword>
<keyword id="KW-0479">Metal-binding</keyword>
<keyword id="KW-0547">Nucleotide-binding</keyword>
<keyword id="KW-0539">Nucleus</keyword>
<keyword id="KW-0597">Phosphoprotein</keyword>
<keyword id="KW-1267">Proteomics identification</keyword>
<keyword id="KW-1185">Reference proteome</keyword>
<keyword id="KW-0723">Serine/threonine-protein kinase</keyword>
<keyword id="KW-0346">Stress response</keyword>
<keyword id="KW-0808">Transferase</keyword>
<keyword id="KW-0829">Tyrosine-protein kinase</keyword>
<evidence type="ECO:0000250" key="1"/>
<evidence type="ECO:0000250" key="2">
    <source>
        <dbReference type="UniProtKB" id="Q8CE90"/>
    </source>
</evidence>
<evidence type="ECO:0000255" key="3"/>
<evidence type="ECO:0000255" key="4">
    <source>
        <dbReference type="PROSITE-ProRule" id="PRU00159"/>
    </source>
</evidence>
<evidence type="ECO:0000255" key="5">
    <source>
        <dbReference type="PROSITE-ProRule" id="PRU10027"/>
    </source>
</evidence>
<evidence type="ECO:0000256" key="6">
    <source>
        <dbReference type="SAM" id="MobiDB-lite"/>
    </source>
</evidence>
<evidence type="ECO:0000269" key="7">
    <source>
    </source>
</evidence>
<evidence type="ECO:0000269" key="8">
    <source>
    </source>
</evidence>
<evidence type="ECO:0000269" key="9">
    <source>
    </source>
</evidence>
<evidence type="ECO:0000269" key="10">
    <source>
    </source>
</evidence>
<evidence type="ECO:0000269" key="11">
    <source>
    </source>
</evidence>
<evidence type="ECO:0000269" key="12">
    <source>
    </source>
</evidence>
<evidence type="ECO:0000269" key="13">
    <source>
    </source>
</evidence>
<evidence type="ECO:0000269" key="14">
    <source>
    </source>
</evidence>
<evidence type="ECO:0000269" key="15">
    <source>
    </source>
</evidence>
<evidence type="ECO:0000269" key="16">
    <source>
    </source>
</evidence>
<evidence type="ECO:0000269" key="17">
    <source>
    </source>
</evidence>
<evidence type="ECO:0000269" key="18">
    <source ref="5"/>
</evidence>
<evidence type="ECO:0000303" key="19">
    <source>
    </source>
</evidence>
<evidence type="ECO:0000303" key="20">
    <source>
    </source>
</evidence>
<evidence type="ECO:0000303" key="21">
    <source>
    </source>
</evidence>
<evidence type="ECO:0000305" key="22"/>
<evidence type="ECO:0007744" key="23">
    <source>
    </source>
</evidence>
<evidence type="ECO:0007744" key="24">
    <source>
    </source>
</evidence>
<evidence type="ECO:0007744" key="25">
    <source>
    </source>
</evidence>
<evidence type="ECO:0007829" key="26">
    <source>
        <dbReference type="PDB" id="5Y90"/>
    </source>
</evidence>
<evidence type="ECO:0007829" key="27">
    <source>
        <dbReference type="PDB" id="6YFZ"/>
    </source>
</evidence>
<evidence type="ECO:0007829" key="28">
    <source>
        <dbReference type="PDB" id="6YG1"/>
    </source>
</evidence>
<evidence type="ECO:0007829" key="29">
    <source>
        <dbReference type="PDB" id="6YZ4"/>
    </source>
</evidence>
<feature type="initiator methionine" description="Removed" evidence="23 24">
    <location>
        <position position="1"/>
    </location>
</feature>
<feature type="chain" id="PRO_0000086388" description="Dual specificity mitogen-activated protein kinase kinase 7">
    <location>
        <begin position="2"/>
        <end position="419"/>
    </location>
</feature>
<feature type="domain" description="Protein kinase" evidence="4">
    <location>
        <begin position="120"/>
        <end position="380"/>
    </location>
</feature>
<feature type="region of interest" description="Disordered" evidence="6">
    <location>
        <begin position="18"/>
        <end position="76"/>
    </location>
</feature>
<feature type="region of interest" description="D domain" evidence="1">
    <location>
        <begin position="37"/>
        <end position="57"/>
    </location>
</feature>
<feature type="region of interest" description="DVD domain">
    <location>
        <begin position="377"/>
        <end position="400"/>
    </location>
</feature>
<feature type="coiled-coil region" evidence="3">
    <location>
        <begin position="2"/>
        <end position="30"/>
    </location>
</feature>
<feature type="compositionally biased region" description="Basic and acidic residues" evidence="6">
    <location>
        <begin position="18"/>
        <end position="30"/>
    </location>
</feature>
<feature type="compositionally biased region" description="Low complexity" evidence="6">
    <location>
        <begin position="36"/>
        <end position="63"/>
    </location>
</feature>
<feature type="active site" description="Proton acceptor" evidence="4 5">
    <location>
        <position position="243"/>
    </location>
</feature>
<feature type="binding site" evidence="4">
    <location>
        <begin position="126"/>
        <end position="134"/>
    </location>
    <ligand>
        <name>ATP</name>
        <dbReference type="ChEBI" id="CHEBI:30616"/>
    </ligand>
</feature>
<feature type="binding site" evidence="4">
    <location>
        <position position="149"/>
    </location>
    <ligand>
        <name>ATP</name>
        <dbReference type="ChEBI" id="CHEBI:30616"/>
    </ligand>
</feature>
<feature type="site" description="Cleavage; by anthrax lethal factor">
    <location>
        <begin position="44"/>
        <end position="45"/>
    </location>
</feature>
<feature type="site" description="Cleavage; by anthrax lethal factor">
    <location>
        <begin position="76"/>
        <end position="77"/>
    </location>
</feature>
<feature type="modified residue" description="N-acetylalanine" evidence="23 24">
    <location>
        <position position="2"/>
    </location>
</feature>
<feature type="modified residue" description="Phosphoserine; by MAP3K" evidence="1">
    <location>
        <position position="271"/>
    </location>
</feature>
<feature type="modified residue" description="Phosphothreonine; by MAP3K" evidence="1">
    <location>
        <position position="275"/>
    </location>
</feature>
<feature type="modified residue" description="Phosphoserine" evidence="25">
    <location>
        <position position="411"/>
    </location>
</feature>
<feature type="splice variant" id="VSP_022309" description="In isoform 3." evidence="20">
    <original>T</original>
    <variation>IIVITLSPAPAPSQRAA</variation>
    <location>
        <position position="42"/>
    </location>
</feature>
<feature type="splice variant" id="VSP_004883" description="In isoform 2." evidence="21">
    <original>Q</original>
    <variation>QVPPSLWRGEGGGPARLDPSWERQWGAGGGGRAPGTLQPSLSSQ</variation>
    <location>
        <position position="111"/>
    </location>
</feature>
<feature type="splice variant" id="VSP_022310" description="In isoform 4." evidence="19">
    <original>L</original>
    <variation>LPCPSPSQ</variation>
    <location>
        <position position="312"/>
    </location>
</feature>
<feature type="sequence variant" id="VAR_040825" description="In dbSNP:rs56316660." evidence="11">
    <original>N</original>
    <variation>S</variation>
    <location>
        <position position="118"/>
    </location>
</feature>
<feature type="sequence variant" id="VAR_040826" description="In dbSNP:rs56106612." evidence="11">
    <original>R</original>
    <variation>C</variation>
    <location>
        <position position="138"/>
    </location>
</feature>
<feature type="sequence variant" id="VAR_040827" description="In a colorectal adenocarcinoma sample; somatic mutation; dbSNP:rs1982759144." evidence="11">
    <original>R</original>
    <variation>C</variation>
    <location>
        <position position="162"/>
    </location>
</feature>
<feature type="sequence variant" id="VAR_040828" description="In a colorectal adenocarcinoma sample; somatic mutation." evidence="11">
    <original>R</original>
    <variation>H</variation>
    <location>
        <position position="162"/>
    </location>
</feature>
<feature type="sequence variant" id="VAR_040829" description="In dbSNP:rs55800262." evidence="11">
    <original>A</original>
    <variation>T</variation>
    <location>
        <position position="195"/>
    </location>
</feature>
<feature type="sequence variant" id="VAR_029890" description="In dbSNP:rs1053566." evidence="17">
    <original>L</original>
    <variation>F</variation>
    <location>
        <position position="259"/>
    </location>
</feature>
<feature type="sequence conflict" description="In Ref. 2; AAB97813." evidence="22" ref="2">
    <original>Q</original>
    <variation>H</variation>
    <location>
        <position position="94"/>
    </location>
</feature>
<feature type="sequence conflict" description="In Ref. 4; ABE03013." evidence="22" ref="4">
    <original>L</original>
    <variation>P</variation>
    <location>
        <position position="106"/>
    </location>
</feature>
<feature type="sequence conflict" description="In Ref. 2; AAB97813." evidence="22" ref="2">
    <original>Q</original>
    <variation>P</variation>
    <location>
        <position position="133"/>
    </location>
</feature>
<feature type="sequence conflict" description="In Ref. 1; AAB88048." evidence="22" ref="1">
    <original>T</original>
    <variation>N</variation>
    <location>
        <position position="142"/>
    </location>
</feature>
<feature type="sequence conflict" description="In Ref. 2; AAB97813." evidence="22" ref="2">
    <original>S</original>
    <variation>N</variation>
    <location>
        <position position="407"/>
    </location>
</feature>
<feature type="sequence conflict" description="In Ref. 2; AAB97813." evidence="22" ref="2">
    <original>L</original>
    <variation>LG</variation>
    <location>
        <position position="415"/>
    </location>
</feature>
<feature type="helix" evidence="28">
    <location>
        <begin position="87"/>
        <end position="100"/>
    </location>
</feature>
<feature type="strand" evidence="26">
    <location>
        <begin position="104"/>
        <end position="108"/>
    </location>
</feature>
<feature type="strand" evidence="26">
    <location>
        <begin position="111"/>
        <end position="115"/>
    </location>
</feature>
<feature type="helix" evidence="26">
    <location>
        <begin position="117"/>
        <end position="119"/>
    </location>
</feature>
<feature type="strand" evidence="26">
    <location>
        <begin position="120"/>
        <end position="126"/>
    </location>
</feature>
<feature type="strand" evidence="26">
    <location>
        <begin position="129"/>
        <end position="138"/>
    </location>
</feature>
<feature type="turn" evidence="26">
    <location>
        <begin position="140"/>
        <end position="142"/>
    </location>
</feature>
<feature type="strand" evidence="26">
    <location>
        <begin position="145"/>
        <end position="152"/>
    </location>
</feature>
<feature type="helix" evidence="26">
    <location>
        <begin position="157"/>
        <end position="171"/>
    </location>
</feature>
<feature type="turn" evidence="27">
    <location>
        <begin position="172"/>
        <end position="175"/>
    </location>
</feature>
<feature type="strand" evidence="26">
    <location>
        <begin position="182"/>
        <end position="187"/>
    </location>
</feature>
<feature type="strand" evidence="26">
    <location>
        <begin position="189"/>
        <end position="196"/>
    </location>
</feature>
<feature type="strand" evidence="26">
    <location>
        <begin position="200"/>
        <end position="202"/>
    </location>
</feature>
<feature type="helix" evidence="26">
    <location>
        <begin position="203"/>
        <end position="210"/>
    </location>
</feature>
<feature type="helix" evidence="26">
    <location>
        <begin position="216"/>
        <end position="237"/>
    </location>
</feature>
<feature type="helix" evidence="26">
    <location>
        <begin position="246"/>
        <end position="248"/>
    </location>
</feature>
<feature type="strand" evidence="26">
    <location>
        <begin position="249"/>
        <end position="251"/>
    </location>
</feature>
<feature type="strand" evidence="26">
    <location>
        <begin position="257"/>
        <end position="259"/>
    </location>
</feature>
<feature type="turn" evidence="26">
    <location>
        <begin position="262"/>
        <end position="265"/>
    </location>
</feature>
<feature type="helix" evidence="26">
    <location>
        <begin position="281"/>
        <end position="283"/>
    </location>
</feature>
<feature type="helix" evidence="26">
    <location>
        <begin position="286"/>
        <end position="289"/>
    </location>
</feature>
<feature type="strand" evidence="29">
    <location>
        <begin position="294"/>
        <end position="296"/>
    </location>
</feature>
<feature type="helix" evidence="26">
    <location>
        <begin position="302"/>
        <end position="317"/>
    </location>
</feature>
<feature type="turn" evidence="29">
    <location>
        <begin position="321"/>
        <end position="324"/>
    </location>
</feature>
<feature type="helix" evidence="26">
    <location>
        <begin position="328"/>
        <end position="337"/>
    </location>
</feature>
<feature type="strand" evidence="26">
    <location>
        <begin position="345"/>
        <end position="347"/>
    </location>
</feature>
<feature type="helix" evidence="26">
    <location>
        <begin position="351"/>
        <end position="360"/>
    </location>
</feature>
<feature type="helix" evidence="26">
    <location>
        <begin position="365"/>
        <end position="367"/>
    </location>
</feature>
<feature type="helix" evidence="26">
    <location>
        <begin position="371"/>
        <end position="374"/>
    </location>
</feature>
<feature type="helix" evidence="26">
    <location>
        <begin position="378"/>
        <end position="385"/>
    </location>
</feature>
<feature type="helix" evidence="26">
    <location>
        <begin position="390"/>
        <end position="401"/>
    </location>
</feature>
<comment type="function">
    <text evidence="14 15 16 17 18">Dual specificity protein kinase which acts as an essential component of the MAP kinase signal transduction pathway. Essential component of the stress-activated protein kinase/c-Jun N-terminal kinase (SAP/JNK) signaling pathway. With MAP2K4/MKK4, is the one of the only known kinase to directly activate the stress-activated protein kinase/c-Jun N-terminal kinases MAPK8/JNK1, MAPK9/JNK2 and MAPK10/JNK3. MAP2K4/MKK4 and MAP2K7/MKK7 both activate the JNKs by phosphorylation, but they differ in their preference for the phosphorylation site in the Thr-Pro-Tyr motif. MAP2K4/MKK4 shows preference for phosphorylation of the Tyr residue and MAP2K7/MKK7 for the Thr residue. The monophosphorylation of JNKs on the Thr residue is sufficient to increase JNK activity indicating that MAP2K7/MKK7 is important to trigger JNK activity, while the additional phosphorylation of the Tyr residue by MAP2K4/MKK4 ensures optimal JNK activation. Has a specific role in JNK signal transduction pathway activated by pro-inflammatory cytokines. The MKK/JNK signaling pathway is also involved in mitochondrial death signaling pathway, including the release cytochrome c, leading to apoptosis. Part of a non-canonical MAPK signaling pathway, composed of the upstream MAP3K12 kinase and downstream MAP kinases MAPK1/ERK2 and MAPK3/ERK1, that enhances the AP-1-mediated transcription of APP in response to APOE (PubMed:28111074).</text>
</comment>
<comment type="catalytic activity">
    <reaction>
        <text>L-seryl-[protein] + ATP = O-phospho-L-seryl-[protein] + ADP + H(+)</text>
        <dbReference type="Rhea" id="RHEA:17989"/>
        <dbReference type="Rhea" id="RHEA-COMP:9863"/>
        <dbReference type="Rhea" id="RHEA-COMP:11604"/>
        <dbReference type="ChEBI" id="CHEBI:15378"/>
        <dbReference type="ChEBI" id="CHEBI:29999"/>
        <dbReference type="ChEBI" id="CHEBI:30616"/>
        <dbReference type="ChEBI" id="CHEBI:83421"/>
        <dbReference type="ChEBI" id="CHEBI:456216"/>
        <dbReference type="EC" id="2.7.12.2"/>
    </reaction>
</comment>
<comment type="catalytic activity">
    <reaction>
        <text>L-threonyl-[protein] + ATP = O-phospho-L-threonyl-[protein] + ADP + H(+)</text>
        <dbReference type="Rhea" id="RHEA:46608"/>
        <dbReference type="Rhea" id="RHEA-COMP:11060"/>
        <dbReference type="Rhea" id="RHEA-COMP:11605"/>
        <dbReference type="ChEBI" id="CHEBI:15378"/>
        <dbReference type="ChEBI" id="CHEBI:30013"/>
        <dbReference type="ChEBI" id="CHEBI:30616"/>
        <dbReference type="ChEBI" id="CHEBI:61977"/>
        <dbReference type="ChEBI" id="CHEBI:456216"/>
        <dbReference type="EC" id="2.7.12.2"/>
    </reaction>
</comment>
<comment type="catalytic activity">
    <reaction>
        <text>L-tyrosyl-[protein] + ATP = O-phospho-L-tyrosyl-[protein] + ADP + H(+)</text>
        <dbReference type="Rhea" id="RHEA:10596"/>
        <dbReference type="Rhea" id="RHEA-COMP:10136"/>
        <dbReference type="Rhea" id="RHEA-COMP:20101"/>
        <dbReference type="ChEBI" id="CHEBI:15378"/>
        <dbReference type="ChEBI" id="CHEBI:30616"/>
        <dbReference type="ChEBI" id="CHEBI:46858"/>
        <dbReference type="ChEBI" id="CHEBI:61978"/>
        <dbReference type="ChEBI" id="CHEBI:456216"/>
        <dbReference type="EC" id="2.7.12.2"/>
    </reaction>
</comment>
<comment type="cofactor">
    <cofactor>
        <name>Mg(2+)</name>
        <dbReference type="ChEBI" id="CHEBI:18420"/>
    </cofactor>
</comment>
<comment type="activity regulation">
    <text evidence="10 15">Activated by phosphorylation by specific MAP kinase kinase kinases such as MAP3K1/MEKK1, MAP3K3/MEKK3, MAP3K11/MLK3 and MAP3K12/DLK.</text>
</comment>
<comment type="subunit">
    <text evidence="2 7 8 12 13">Interacts with isoform 1 of VRK2. Interacts (via its D domain) with its substrates MAPK8/JNK1, MAPK9/JNK2 and MAPK10/JNK3 (By similarity). Interacts (via its DVD domain) with MAP3Ks activators like MAP3K5/ASK1 and MAP3K1/MEKK1 (By similarity). Interacts with MAPK8IP1/JIP1, MAPK8IP2/JIP2 and MAPK8IP3/JIP3 scaffold proteins. Interacts with RASSF7, the interaction promotes phosphorylation. Found in a complex with SH3RF1, RAC1, MAP3K11/MLK3, MAPK8IP1/JIP1 and MAPK8/JNK1. Found in a complex with SH3RF1, RAC2, MAP3K7/TAK1, MAPK8IP1/JIP1, MAPK8/JNK1 and MAPK9/JNK2 (By similarity).</text>
</comment>
<comment type="interaction">
    <interactant intactId="EBI-492605">
        <id>O14733</id>
    </interactant>
    <interactant intactId="EBI-4567563">
        <id>O15519-1</id>
        <label>CFLAR</label>
    </interactant>
    <organismsDiffer>false</organismsDiffer>
    <experiments>2</experiments>
</comment>
<comment type="interaction">
    <interactant intactId="EBI-492605">
        <id>O14733</id>
    </interactant>
    <interactant intactId="EBI-448187">
        <id>O75293</id>
        <label>GADD45B</label>
    </interactant>
    <organismsDiffer>false</organismsDiffer>
    <experiments>8</experiments>
</comment>
<comment type="interaction">
    <interactant intactId="EBI-492605">
        <id>O14733</id>
    </interactant>
    <interactant intactId="EBI-352572">
        <id>P08238</id>
        <label>HSP90AB1</label>
    </interactant>
    <organismsDiffer>false</organismsDiffer>
    <experiments>2</experiments>
</comment>
<comment type="interaction">
    <interactant intactId="EBI-492605">
        <id>O14733</id>
    </interactant>
    <interactant intactId="EBI-5323863">
        <id>Q5S007</id>
        <label>LRRK2</label>
    </interactant>
    <organismsDiffer>false</organismsDiffer>
    <experiments>3</experiments>
</comment>
<comment type="interaction">
    <interactant intactId="EBI-492605">
        <id>O14733</id>
    </interactant>
    <interactant intactId="EBI-358684">
        <id>O43318</id>
        <label>MAP3K7</label>
    </interactant>
    <organismsDiffer>false</organismsDiffer>
    <experiments>3</experiments>
</comment>
<comment type="interaction">
    <interactant intactId="EBI-492605">
        <id>O14733</id>
    </interactant>
    <interactant intactId="EBI-78404">
        <id>Q9UQF2</id>
        <label>MAPK8IP1</label>
    </interactant>
    <organismsDiffer>false</organismsDiffer>
    <experiments>5</experiments>
</comment>
<comment type="interaction">
    <interactant intactId="EBI-492605">
        <id>O14733</id>
    </interactant>
    <interactant intactId="EBI-356498">
        <id>P62258</id>
        <label>YWHAE</label>
    </interactant>
    <organismsDiffer>false</organismsDiffer>
    <experiments>2</experiments>
</comment>
<comment type="interaction">
    <interactant intactId="EBI-492627">
        <id>O14733-2</id>
    </interactant>
    <interactant intactId="EBI-286483">
        <id>P45983</id>
        <label>MAPK8</label>
    </interactant>
    <organismsDiffer>false</organismsDiffer>
    <experiments>3</experiments>
</comment>
<comment type="subcellular location">
    <subcellularLocation>
        <location>Nucleus</location>
    </subcellularLocation>
    <subcellularLocation>
        <location evidence="1">Cytoplasm</location>
    </subcellularLocation>
</comment>
<comment type="alternative products">
    <event type="alternative splicing"/>
    <isoform>
        <id>O14733-1</id>
        <name>1</name>
        <name>A</name>
        <sequence type="displayed"/>
    </isoform>
    <isoform>
        <id>O14733-2</id>
        <name>2</name>
        <name>B</name>
        <sequence type="described" ref="VSP_004883"/>
    </isoform>
    <isoform>
        <id>O14733-3</id>
        <name>3</name>
        <name>gamma1</name>
        <sequence type="described" ref="VSP_022309"/>
    </isoform>
    <isoform>
        <id>O14733-4</id>
        <name>4</name>
        <sequence type="described" ref="VSP_022310"/>
    </isoform>
</comment>
<comment type="tissue specificity">
    <text evidence="10 16 17">Ubiquitous; with highest level of expression in skeletal muscle. Isoform 3 is found at low levels in placenta, fetal liver, and skeletal muscle.</text>
</comment>
<comment type="domain">
    <text evidence="9">The DVD domain (residues 377-400) contains a conserved docking site and is found in the mammalian MAP kinase kinases (MAP2Ks). The DVD sites bind to their specific upstream MAP kinase kinase kinases (MAP3Ks) and are essential for activation.</text>
</comment>
<comment type="domain">
    <text evidence="9">The D domain (residues 37-57) contains a conserved docking site and is required for the binding to MAPK substrates.</text>
</comment>
<comment type="PTM">
    <text evidence="1">Activated by phosphorylation on Ser-271 and Thr-275 by MAP kinase kinase kinases (MAP3Ks).</text>
</comment>
<comment type="miscellaneous">
    <molecule>Isoform 2</molecule>
    <text evidence="22">May be due to intron retention.</text>
</comment>
<comment type="similarity">
    <text evidence="22">Belongs to the protein kinase superfamily. STE Ser/Thr protein kinase family. MAP kinase kinase subfamily.</text>
</comment>
<comment type="sequence caution" evidence="22">
    <conflict type="erroneous termination">
        <sequence resource="EMBL-CDS" id="AAB97813"/>
    </conflict>
    <text>Extended C-terminus.</text>
</comment>
<comment type="sequence caution" evidence="22">
    <conflict type="frameshift">
        <sequence resource="EMBL-CDS" id="AAB97813"/>
    </conflict>
</comment>
<organism>
    <name type="scientific">Homo sapiens</name>
    <name type="common">Human</name>
    <dbReference type="NCBI Taxonomy" id="9606"/>
    <lineage>
        <taxon>Eukaryota</taxon>
        <taxon>Metazoa</taxon>
        <taxon>Chordata</taxon>
        <taxon>Craniata</taxon>
        <taxon>Vertebrata</taxon>
        <taxon>Euteleostomi</taxon>
        <taxon>Mammalia</taxon>
        <taxon>Eutheria</taxon>
        <taxon>Euarchontoglires</taxon>
        <taxon>Primates</taxon>
        <taxon>Haplorrhini</taxon>
        <taxon>Catarrhini</taxon>
        <taxon>Hominidae</taxon>
        <taxon>Homo</taxon>
    </lineage>
</organism>
<proteinExistence type="evidence at protein level"/>
<gene>
    <name type="primary">MAP2K7</name>
    <name type="synonym">JNKK2</name>
    <name type="synonym">MEK7</name>
    <name type="synonym">MKK7</name>
    <name type="synonym">PRKMK7</name>
    <name type="synonym">SKK4</name>
</gene>
<protein>
    <recommendedName>
        <fullName>Dual specificity mitogen-activated protein kinase kinase 7</fullName>
        <shortName>MAP kinase kinase 7</shortName>
        <shortName>MAPKK 7</shortName>
        <ecNumber>2.7.12.2</ecNumber>
    </recommendedName>
    <alternativeName>
        <fullName>JNK-activating kinase 2</fullName>
    </alternativeName>
    <alternativeName>
        <fullName>MAPK/ERK kinase 7</fullName>
        <shortName>MEK 7</shortName>
    </alternativeName>
    <alternativeName>
        <fullName>Stress-activated protein kinase kinase 4</fullName>
        <shortName>SAPK kinase 4</shortName>
        <shortName>SAPKK-4</shortName>
        <shortName>SAPKK4</shortName>
    </alternativeName>
    <alternativeName>
        <fullName>c-Jun N-terminal kinase kinase 2</fullName>
        <shortName>JNK kinase 2</shortName>
        <shortName>JNKK 2</shortName>
    </alternativeName>
</protein>
<dbReference type="EC" id="2.7.12.2"/>
<dbReference type="EMBL" id="AF014401">
    <property type="protein sequence ID" value="AAB88048.1"/>
    <property type="molecule type" value="mRNA"/>
</dbReference>
<dbReference type="EMBL" id="AF006689">
    <property type="protein sequence ID" value="AAB97813.1"/>
    <property type="status" value="ALT_SEQ"/>
    <property type="molecule type" value="mRNA"/>
</dbReference>
<dbReference type="EMBL" id="AF013588">
    <property type="protein sequence ID" value="AAC16272.1"/>
    <property type="molecule type" value="mRNA"/>
</dbReference>
<dbReference type="EMBL" id="AF013589">
    <property type="protein sequence ID" value="AAC16273.1"/>
    <property type="molecule type" value="mRNA"/>
</dbReference>
<dbReference type="EMBL" id="DQ445915">
    <property type="protein sequence ID" value="ABE03013.1"/>
    <property type="molecule type" value="mRNA"/>
</dbReference>
<dbReference type="EMBL" id="AF022805">
    <property type="protein sequence ID" value="AAC26142.1"/>
    <property type="molecule type" value="mRNA"/>
</dbReference>
<dbReference type="EMBL" id="AK313899">
    <property type="protein sequence ID" value="BAG36622.1"/>
    <property type="molecule type" value="mRNA"/>
</dbReference>
<dbReference type="EMBL" id="CH471139">
    <property type="protein sequence ID" value="EAW68964.1"/>
    <property type="molecule type" value="Genomic_DNA"/>
</dbReference>
<dbReference type="EMBL" id="CH471139">
    <property type="protein sequence ID" value="EAW68968.1"/>
    <property type="molecule type" value="Genomic_DNA"/>
</dbReference>
<dbReference type="EMBL" id="BC038295">
    <property type="protein sequence ID" value="AAH38295.1"/>
    <property type="molecule type" value="mRNA"/>
</dbReference>
<dbReference type="EMBL" id="AF003199">
    <property type="protein sequence ID" value="AAB63374.1"/>
    <property type="molecule type" value="mRNA"/>
</dbReference>
<dbReference type="CCDS" id="CCDS42491.1">
    <molecule id="O14733-1"/>
</dbReference>
<dbReference type="CCDS" id="CCDS74277.1">
    <molecule id="O14733-3"/>
</dbReference>
<dbReference type="CCDS" id="CCDS74278.1">
    <molecule id="O14733-4"/>
</dbReference>
<dbReference type="RefSeq" id="NP_001284484.1">
    <molecule id="O14733-3"/>
    <property type="nucleotide sequence ID" value="NM_001297555.2"/>
</dbReference>
<dbReference type="RefSeq" id="NP_001284485.1">
    <molecule id="O14733-4"/>
    <property type="nucleotide sequence ID" value="NM_001297556.2"/>
</dbReference>
<dbReference type="RefSeq" id="NP_660186.1">
    <molecule id="O14733-1"/>
    <property type="nucleotide sequence ID" value="NM_145185.4"/>
</dbReference>
<dbReference type="PDB" id="2DYL">
    <property type="method" value="X-ray"/>
    <property type="resolution" value="2.45 A"/>
    <property type="chains" value="A=101-405"/>
</dbReference>
<dbReference type="PDB" id="3WZU">
    <property type="method" value="X-ray"/>
    <property type="resolution" value="3.01 A"/>
    <property type="chains" value="A=103-419"/>
</dbReference>
<dbReference type="PDB" id="4UX9">
    <property type="method" value="X-ray"/>
    <property type="resolution" value="2.34 A"/>
    <property type="chains" value="F/G/H/I=37-48"/>
</dbReference>
<dbReference type="PDB" id="5B2K">
    <property type="method" value="X-ray"/>
    <property type="resolution" value="2.75 A"/>
    <property type="chains" value="A=103-419"/>
</dbReference>
<dbReference type="PDB" id="5B2L">
    <property type="method" value="X-ray"/>
    <property type="resolution" value="2.10 A"/>
    <property type="chains" value="A=103-419"/>
</dbReference>
<dbReference type="PDB" id="5B2M">
    <property type="method" value="X-ray"/>
    <property type="resolution" value="3.06 A"/>
    <property type="chains" value="A=103-419"/>
</dbReference>
<dbReference type="PDB" id="5Y8U">
    <property type="method" value="X-ray"/>
    <property type="resolution" value="2.92 A"/>
    <property type="chains" value="A=103-419"/>
</dbReference>
<dbReference type="PDB" id="5Y90">
    <property type="method" value="X-ray"/>
    <property type="resolution" value="1.30 A"/>
    <property type="chains" value="A=103-419"/>
</dbReference>
<dbReference type="PDB" id="5Z1D">
    <property type="method" value="X-ray"/>
    <property type="resolution" value="2.28 A"/>
    <property type="chains" value="A=102-419"/>
</dbReference>
<dbReference type="PDB" id="5Z1E">
    <property type="method" value="X-ray"/>
    <property type="resolution" value="2.30 A"/>
    <property type="chains" value="A=102-419"/>
</dbReference>
<dbReference type="PDB" id="6IB0">
    <property type="method" value="X-ray"/>
    <property type="resolution" value="2.60 A"/>
    <property type="chains" value="A=101-408"/>
</dbReference>
<dbReference type="PDB" id="6IB2">
    <property type="method" value="X-ray"/>
    <property type="resolution" value="2.10 A"/>
    <property type="chains" value="A=101-408"/>
</dbReference>
<dbReference type="PDB" id="6QFL">
    <property type="method" value="X-ray"/>
    <property type="resolution" value="2.20 A"/>
    <property type="chains" value="A=101-408"/>
</dbReference>
<dbReference type="PDB" id="6QFR">
    <property type="method" value="X-ray"/>
    <property type="resolution" value="2.30 A"/>
    <property type="chains" value="A=101-408"/>
</dbReference>
<dbReference type="PDB" id="6QFT">
    <property type="method" value="X-ray"/>
    <property type="resolution" value="2.70 A"/>
    <property type="chains" value="A=101-408"/>
</dbReference>
<dbReference type="PDB" id="6QG4">
    <property type="method" value="X-ray"/>
    <property type="resolution" value="2.30 A"/>
    <property type="chains" value="A=111-408"/>
</dbReference>
<dbReference type="PDB" id="6QG7">
    <property type="method" value="X-ray"/>
    <property type="resolution" value="2.10 A"/>
    <property type="chains" value="A=101-408"/>
</dbReference>
<dbReference type="PDB" id="6QHO">
    <property type="method" value="X-ray"/>
    <property type="resolution" value="2.70 A"/>
    <property type="chains" value="A=111-408"/>
</dbReference>
<dbReference type="PDB" id="6QHR">
    <property type="method" value="X-ray"/>
    <property type="resolution" value="2.52 A"/>
    <property type="chains" value="A=111-408"/>
</dbReference>
<dbReference type="PDB" id="6YFZ">
    <property type="method" value="X-ray"/>
    <property type="resolution" value="1.90 A"/>
    <property type="chains" value="A=100-405"/>
</dbReference>
<dbReference type="PDB" id="6YG0">
    <property type="method" value="X-ray"/>
    <property type="resolution" value="2.00 A"/>
    <property type="chains" value="A=100-405"/>
</dbReference>
<dbReference type="PDB" id="6YG1">
    <property type="method" value="X-ray"/>
    <property type="resolution" value="2.22 A"/>
    <property type="chains" value="A/B/C=60-405"/>
</dbReference>
<dbReference type="PDB" id="6YG2">
    <property type="method" value="X-ray"/>
    <property type="resolution" value="2.00 A"/>
    <property type="chains" value="A=100-405"/>
</dbReference>
<dbReference type="PDB" id="6YG3">
    <property type="method" value="X-ray"/>
    <property type="resolution" value="2.05 A"/>
    <property type="chains" value="A=100-405"/>
</dbReference>
<dbReference type="PDB" id="6YG4">
    <property type="method" value="X-ray"/>
    <property type="resolution" value="2.30 A"/>
    <property type="chains" value="A=100-405"/>
</dbReference>
<dbReference type="PDB" id="6YG5">
    <property type="method" value="X-ray"/>
    <property type="resolution" value="2.40 A"/>
    <property type="chains" value="A=100-405"/>
</dbReference>
<dbReference type="PDB" id="6YG6">
    <property type="method" value="X-ray"/>
    <property type="resolution" value="2.15 A"/>
    <property type="chains" value="A/B=100-405"/>
</dbReference>
<dbReference type="PDB" id="6YG7">
    <property type="method" value="X-ray"/>
    <property type="resolution" value="2.20 A"/>
    <property type="chains" value="A/B=100-405"/>
</dbReference>
<dbReference type="PDB" id="6YZ4">
    <property type="method" value="X-ray"/>
    <property type="resolution" value="1.70 A"/>
    <property type="chains" value="A=100-405"/>
</dbReference>
<dbReference type="PDB" id="7CBX">
    <property type="method" value="X-ray"/>
    <property type="resolution" value="2.06 A"/>
    <property type="chains" value="A=103-419"/>
</dbReference>
<dbReference type="PDB" id="7OVI">
    <property type="method" value="X-ray"/>
    <property type="resolution" value="1.95 A"/>
    <property type="chains" value="A=101-408"/>
</dbReference>
<dbReference type="PDB" id="7OVJ">
    <property type="method" value="X-ray"/>
    <property type="resolution" value="2.35 A"/>
    <property type="chains" value="A=101-408"/>
</dbReference>
<dbReference type="PDB" id="7OVK">
    <property type="method" value="X-ray"/>
    <property type="resolution" value="2.05 A"/>
    <property type="chains" value="A=101-408"/>
</dbReference>
<dbReference type="PDB" id="7OVL">
    <property type="method" value="X-ray"/>
    <property type="resolution" value="2.90 A"/>
    <property type="chains" value="A=101-408"/>
</dbReference>
<dbReference type="PDB" id="7OVM">
    <property type="method" value="X-ray"/>
    <property type="resolution" value="2.90 A"/>
    <property type="chains" value="A=101-408"/>
</dbReference>
<dbReference type="PDB" id="7OVN">
    <property type="method" value="X-ray"/>
    <property type="resolution" value="2.90 A"/>
    <property type="chains" value="A=101-408"/>
</dbReference>
<dbReference type="PDBsum" id="2DYL"/>
<dbReference type="PDBsum" id="3WZU"/>
<dbReference type="PDBsum" id="4UX9"/>
<dbReference type="PDBsum" id="5B2K"/>
<dbReference type="PDBsum" id="5B2L"/>
<dbReference type="PDBsum" id="5B2M"/>
<dbReference type="PDBsum" id="5Y8U"/>
<dbReference type="PDBsum" id="5Y90"/>
<dbReference type="PDBsum" id="5Z1D"/>
<dbReference type="PDBsum" id="5Z1E"/>
<dbReference type="PDBsum" id="6IB0"/>
<dbReference type="PDBsum" id="6IB2"/>
<dbReference type="PDBsum" id="6QFL"/>
<dbReference type="PDBsum" id="6QFR"/>
<dbReference type="PDBsum" id="6QFT"/>
<dbReference type="PDBsum" id="6QG4"/>
<dbReference type="PDBsum" id="6QG7"/>
<dbReference type="PDBsum" id="6QHO"/>
<dbReference type="PDBsum" id="6QHR"/>
<dbReference type="PDBsum" id="6YFZ"/>
<dbReference type="PDBsum" id="6YG0"/>
<dbReference type="PDBsum" id="6YG1"/>
<dbReference type="PDBsum" id="6YG2"/>
<dbReference type="PDBsum" id="6YG3"/>
<dbReference type="PDBsum" id="6YG4"/>
<dbReference type="PDBsum" id="6YG5"/>
<dbReference type="PDBsum" id="6YG6"/>
<dbReference type="PDBsum" id="6YG7"/>
<dbReference type="PDBsum" id="6YZ4"/>
<dbReference type="PDBsum" id="7CBX"/>
<dbReference type="PDBsum" id="7OVI"/>
<dbReference type="PDBsum" id="7OVJ"/>
<dbReference type="PDBsum" id="7OVK"/>
<dbReference type="PDBsum" id="7OVL"/>
<dbReference type="PDBsum" id="7OVM"/>
<dbReference type="PDBsum" id="7OVN"/>
<dbReference type="SMR" id="O14733"/>
<dbReference type="BioGRID" id="111595">
    <property type="interactions" value="200"/>
</dbReference>
<dbReference type="FunCoup" id="O14733">
    <property type="interactions" value="4166"/>
</dbReference>
<dbReference type="IntAct" id="O14733">
    <property type="interactions" value="141"/>
</dbReference>
<dbReference type="MINT" id="O14733"/>
<dbReference type="STRING" id="9606.ENSP00000381070"/>
<dbReference type="BindingDB" id="O14733"/>
<dbReference type="ChEMBL" id="CHEMBL3530"/>
<dbReference type="DrugBank" id="DB14904">
    <property type="generic name" value="Pimasertib"/>
</dbReference>
<dbReference type="DrugCentral" id="O14733"/>
<dbReference type="GuidetoPHARMACOLOGY" id="2068"/>
<dbReference type="iPTMnet" id="O14733"/>
<dbReference type="MetOSite" id="O14733"/>
<dbReference type="PhosphoSitePlus" id="O14733"/>
<dbReference type="BioMuta" id="MAP2K7"/>
<dbReference type="CPTAC" id="CPTAC-3079"/>
<dbReference type="CPTAC" id="CPTAC-3080"/>
<dbReference type="CPTAC" id="CPTAC-822"/>
<dbReference type="CPTAC" id="CPTAC-823"/>
<dbReference type="jPOST" id="O14733"/>
<dbReference type="MassIVE" id="O14733"/>
<dbReference type="PaxDb" id="9606-ENSP00000381070"/>
<dbReference type="PeptideAtlas" id="O14733"/>
<dbReference type="ProteomicsDB" id="48192">
    <molecule id="O14733-1"/>
</dbReference>
<dbReference type="ProteomicsDB" id="48193">
    <molecule id="O14733-2"/>
</dbReference>
<dbReference type="ProteomicsDB" id="48194">
    <molecule id="O14733-3"/>
</dbReference>
<dbReference type="ProteomicsDB" id="48195">
    <molecule id="O14733-4"/>
</dbReference>
<dbReference type="Pumba" id="O14733"/>
<dbReference type="Antibodypedia" id="1176">
    <property type="antibodies" value="766 antibodies from 42 providers"/>
</dbReference>
<dbReference type="DNASU" id="5609"/>
<dbReference type="Ensembl" id="ENST00000397979.4">
    <molecule id="O14733-1"/>
    <property type="protein sequence ID" value="ENSP00000381066.3"/>
    <property type="gene ID" value="ENSG00000076984.18"/>
</dbReference>
<dbReference type="Ensembl" id="ENST00000397981.7">
    <molecule id="O14733-4"/>
    <property type="protein sequence ID" value="ENSP00000381068.3"/>
    <property type="gene ID" value="ENSG00000076984.18"/>
</dbReference>
<dbReference type="Ensembl" id="ENST00000397983.7">
    <molecule id="O14733-3"/>
    <property type="protein sequence ID" value="ENSP00000381070.2"/>
    <property type="gene ID" value="ENSG00000076984.18"/>
</dbReference>
<dbReference type="GeneID" id="5609"/>
<dbReference type="KEGG" id="hsa:5609"/>
<dbReference type="MANE-Select" id="ENST00000397979.4">
    <property type="protein sequence ID" value="ENSP00000381066.3"/>
    <property type="RefSeq nucleotide sequence ID" value="NM_145185.4"/>
    <property type="RefSeq protein sequence ID" value="NP_660186.1"/>
</dbReference>
<dbReference type="UCSC" id="uc002mit.4">
    <molecule id="O14733-1"/>
    <property type="organism name" value="human"/>
</dbReference>
<dbReference type="AGR" id="HGNC:6847"/>
<dbReference type="CTD" id="5609"/>
<dbReference type="DisGeNET" id="5609"/>
<dbReference type="GeneCards" id="MAP2K7"/>
<dbReference type="HGNC" id="HGNC:6847">
    <property type="gene designation" value="MAP2K7"/>
</dbReference>
<dbReference type="HPA" id="ENSG00000076984">
    <property type="expression patterns" value="Low tissue specificity"/>
</dbReference>
<dbReference type="MIM" id="603014">
    <property type="type" value="gene"/>
</dbReference>
<dbReference type="neXtProt" id="NX_O14733"/>
<dbReference type="OpenTargets" id="ENSG00000076984"/>
<dbReference type="PharmGKB" id="PA284"/>
<dbReference type="VEuPathDB" id="HostDB:ENSG00000076984"/>
<dbReference type="eggNOG" id="KOG0983">
    <property type="taxonomic scope" value="Eukaryota"/>
</dbReference>
<dbReference type="GeneTree" id="ENSGT00940000158914"/>
<dbReference type="HOGENOM" id="CLU_000288_63_23_1"/>
<dbReference type="InParanoid" id="O14733"/>
<dbReference type="OMA" id="NVWICME"/>
<dbReference type="OrthoDB" id="10252354at2759"/>
<dbReference type="PAN-GO" id="O14733">
    <property type="GO annotations" value="2 GO annotations based on evolutionary models"/>
</dbReference>
<dbReference type="PhylomeDB" id="O14733"/>
<dbReference type="TreeFam" id="TF350701"/>
<dbReference type="BRENDA" id="2.7.12.2">
    <property type="organism ID" value="2681"/>
</dbReference>
<dbReference type="PathwayCommons" id="O14733"/>
<dbReference type="Reactome" id="R-HSA-2559580">
    <property type="pathway name" value="Oxidative Stress Induced Senescence"/>
</dbReference>
<dbReference type="Reactome" id="R-HSA-2871796">
    <property type="pathway name" value="FCERI mediated MAPK activation"/>
</dbReference>
<dbReference type="Reactome" id="R-HSA-450321">
    <property type="pathway name" value="JNK (c-Jun kinases) phosphorylation and activation mediated by activated human TAK1"/>
</dbReference>
<dbReference type="Reactome" id="R-HSA-5210891">
    <property type="pathway name" value="Uptake and function of anthrax toxins"/>
</dbReference>
<dbReference type="SignaLink" id="O14733"/>
<dbReference type="SIGNOR" id="O14733"/>
<dbReference type="BioGRID-ORCS" id="5609">
    <property type="hits" value="92 hits in 1195 CRISPR screens"/>
</dbReference>
<dbReference type="ChiTaRS" id="MAP2K7">
    <property type="organism name" value="human"/>
</dbReference>
<dbReference type="EvolutionaryTrace" id="O14733"/>
<dbReference type="GeneWiki" id="MAP2K7"/>
<dbReference type="GenomeRNAi" id="5609"/>
<dbReference type="Pharos" id="O14733">
    <property type="development level" value="Tchem"/>
</dbReference>
<dbReference type="PRO" id="PR:O14733"/>
<dbReference type="Proteomes" id="UP000005640">
    <property type="component" value="Chromosome 19"/>
</dbReference>
<dbReference type="RNAct" id="O14733">
    <property type="molecule type" value="protein"/>
</dbReference>
<dbReference type="Bgee" id="ENSG00000076984">
    <property type="expression patterns" value="Expressed in buccal mucosa cell and 189 other cell types or tissues"/>
</dbReference>
<dbReference type="GO" id="GO:0005737">
    <property type="term" value="C:cytoplasm"/>
    <property type="evidence" value="ECO:0000250"/>
    <property type="project" value="UniProtKB"/>
</dbReference>
<dbReference type="GO" id="GO:0005829">
    <property type="term" value="C:cytosol"/>
    <property type="evidence" value="ECO:0000304"/>
    <property type="project" value="Reactome"/>
</dbReference>
<dbReference type="GO" id="GO:0005634">
    <property type="term" value="C:nucleus"/>
    <property type="evidence" value="ECO:0000250"/>
    <property type="project" value="UniProtKB"/>
</dbReference>
<dbReference type="GO" id="GO:0005524">
    <property type="term" value="F:ATP binding"/>
    <property type="evidence" value="ECO:0007669"/>
    <property type="project" value="UniProtKB-KW"/>
</dbReference>
<dbReference type="GO" id="GO:0019899">
    <property type="term" value="F:enzyme binding"/>
    <property type="evidence" value="ECO:0000353"/>
    <property type="project" value="BHF-UCL"/>
</dbReference>
<dbReference type="GO" id="GO:0008545">
    <property type="term" value="F:JUN kinase kinase activity"/>
    <property type="evidence" value="ECO:0000250"/>
    <property type="project" value="ARUK-UCL"/>
</dbReference>
<dbReference type="GO" id="GO:0000287">
    <property type="term" value="F:magnesium ion binding"/>
    <property type="evidence" value="ECO:0000314"/>
    <property type="project" value="UniProtKB"/>
</dbReference>
<dbReference type="GO" id="GO:0004707">
    <property type="term" value="F:MAP kinase activity"/>
    <property type="evidence" value="ECO:0007669"/>
    <property type="project" value="Ensembl"/>
</dbReference>
<dbReference type="GO" id="GO:0004708">
    <property type="term" value="F:MAP kinase kinase activity"/>
    <property type="evidence" value="ECO:0000314"/>
    <property type="project" value="UniProtKB"/>
</dbReference>
<dbReference type="GO" id="GO:0140677">
    <property type="term" value="F:molecular function activator activity"/>
    <property type="evidence" value="ECO:0000269"/>
    <property type="project" value="DisProt"/>
</dbReference>
<dbReference type="GO" id="GO:0019901">
    <property type="term" value="F:protein kinase binding"/>
    <property type="evidence" value="ECO:0000353"/>
    <property type="project" value="UniProtKB"/>
</dbReference>
<dbReference type="GO" id="GO:0019903">
    <property type="term" value="F:protein phosphatase binding"/>
    <property type="evidence" value="ECO:0000250"/>
    <property type="project" value="BHF-UCL"/>
</dbReference>
<dbReference type="GO" id="GO:0106310">
    <property type="term" value="F:protein serine kinase activity"/>
    <property type="evidence" value="ECO:0007669"/>
    <property type="project" value="RHEA"/>
</dbReference>
<dbReference type="GO" id="GO:0004713">
    <property type="term" value="F:protein tyrosine kinase activity"/>
    <property type="evidence" value="ECO:0007669"/>
    <property type="project" value="UniProtKB-KW"/>
</dbReference>
<dbReference type="GO" id="GO:0006915">
    <property type="term" value="P:apoptotic process"/>
    <property type="evidence" value="ECO:0007669"/>
    <property type="project" value="UniProtKB-KW"/>
</dbReference>
<dbReference type="GO" id="GO:0071347">
    <property type="term" value="P:cellular response to interleukin-1"/>
    <property type="evidence" value="ECO:0007669"/>
    <property type="project" value="Ensembl"/>
</dbReference>
<dbReference type="GO" id="GO:0071222">
    <property type="term" value="P:cellular response to lipopolysaccharide"/>
    <property type="evidence" value="ECO:0007669"/>
    <property type="project" value="Ensembl"/>
</dbReference>
<dbReference type="GO" id="GO:0090398">
    <property type="term" value="P:cellular senescence"/>
    <property type="evidence" value="ECO:0000304"/>
    <property type="project" value="Reactome"/>
</dbReference>
<dbReference type="GO" id="GO:0038095">
    <property type="term" value="P:Fc-epsilon receptor signaling pathway"/>
    <property type="evidence" value="ECO:0000304"/>
    <property type="project" value="Reactome"/>
</dbReference>
<dbReference type="GO" id="GO:0007254">
    <property type="term" value="P:JNK cascade"/>
    <property type="evidence" value="ECO:0000250"/>
    <property type="project" value="BHF-UCL"/>
</dbReference>
<dbReference type="GO" id="GO:0045893">
    <property type="term" value="P:positive regulation of DNA-templated transcription"/>
    <property type="evidence" value="ECO:0000315"/>
    <property type="project" value="UniProtKB"/>
</dbReference>
<dbReference type="GO" id="GO:0070374">
    <property type="term" value="P:positive regulation of ERK1 and ERK2 cascade"/>
    <property type="evidence" value="ECO:0000315"/>
    <property type="project" value="UniProtKB"/>
</dbReference>
<dbReference type="GO" id="GO:0046330">
    <property type="term" value="P:positive regulation of JNK cascade"/>
    <property type="evidence" value="ECO:0007669"/>
    <property type="project" value="Ensembl"/>
</dbReference>
<dbReference type="GO" id="GO:0032206">
    <property type="term" value="P:positive regulation of telomere maintenance"/>
    <property type="evidence" value="ECO:0000315"/>
    <property type="project" value="BHF-UCL"/>
</dbReference>
<dbReference type="GO" id="GO:2000671">
    <property type="term" value="P:regulation of motor neuron apoptotic process"/>
    <property type="evidence" value="ECO:0007669"/>
    <property type="project" value="Ensembl"/>
</dbReference>
<dbReference type="GO" id="GO:0009408">
    <property type="term" value="P:response to heat"/>
    <property type="evidence" value="ECO:0000314"/>
    <property type="project" value="UniProtKB"/>
</dbReference>
<dbReference type="GO" id="GO:0006970">
    <property type="term" value="P:response to osmotic stress"/>
    <property type="evidence" value="ECO:0000314"/>
    <property type="project" value="UniProtKB"/>
</dbReference>
<dbReference type="GO" id="GO:0034612">
    <property type="term" value="P:response to tumor necrosis factor"/>
    <property type="evidence" value="ECO:0000314"/>
    <property type="project" value="UniProtKB"/>
</dbReference>
<dbReference type="GO" id="GO:0009411">
    <property type="term" value="P:response to UV"/>
    <property type="evidence" value="ECO:0000314"/>
    <property type="project" value="UniProtKB"/>
</dbReference>
<dbReference type="GO" id="GO:0009611">
    <property type="term" value="P:response to wounding"/>
    <property type="evidence" value="ECO:0007669"/>
    <property type="project" value="Ensembl"/>
</dbReference>
<dbReference type="GO" id="GO:0007165">
    <property type="term" value="P:signal transduction"/>
    <property type="evidence" value="ECO:0000304"/>
    <property type="project" value="ProtInc"/>
</dbReference>
<dbReference type="GO" id="GO:0051403">
    <property type="term" value="P:stress-activated MAPK cascade"/>
    <property type="evidence" value="ECO:0000314"/>
    <property type="project" value="UniProtKB"/>
</dbReference>
<dbReference type="CDD" id="cd06618">
    <property type="entry name" value="PKc_MKK7"/>
    <property type="match status" value="1"/>
</dbReference>
<dbReference type="DisProt" id="DP00841"/>
<dbReference type="FunFam" id="3.30.200.20:FF:000040">
    <property type="entry name" value="Dual specificity mitogen-activated protein kinase kinase"/>
    <property type="match status" value="1"/>
</dbReference>
<dbReference type="FunFam" id="1.10.510.10:FF:000214">
    <property type="entry name" value="Dual specificity mitogen-activated protein kinase kinase 7"/>
    <property type="match status" value="1"/>
</dbReference>
<dbReference type="Gene3D" id="3.30.200.20">
    <property type="entry name" value="Phosphorylase Kinase, domain 1"/>
    <property type="match status" value="1"/>
</dbReference>
<dbReference type="Gene3D" id="1.10.510.10">
    <property type="entry name" value="Transferase(Phosphotransferase) domain 1"/>
    <property type="match status" value="1"/>
</dbReference>
<dbReference type="InterPro" id="IPR052468">
    <property type="entry name" value="Dual_spec_MAPK_kinase"/>
</dbReference>
<dbReference type="InterPro" id="IPR011009">
    <property type="entry name" value="Kinase-like_dom_sf"/>
</dbReference>
<dbReference type="InterPro" id="IPR000719">
    <property type="entry name" value="Prot_kinase_dom"/>
</dbReference>
<dbReference type="InterPro" id="IPR008271">
    <property type="entry name" value="Ser/Thr_kinase_AS"/>
</dbReference>
<dbReference type="PANTHER" id="PTHR47238:SF2">
    <property type="entry name" value="DUAL SPECIFICITY MITOGEN-ACTIVATED PROTEIN KINASE KINASE HEMIPTEROUS"/>
    <property type="match status" value="1"/>
</dbReference>
<dbReference type="PANTHER" id="PTHR47238">
    <property type="entry name" value="MITOGEN-ACTIVATED PROTEIN KINASE KINASE 5"/>
    <property type="match status" value="1"/>
</dbReference>
<dbReference type="Pfam" id="PF00069">
    <property type="entry name" value="Pkinase"/>
    <property type="match status" value="1"/>
</dbReference>
<dbReference type="SMART" id="SM00220">
    <property type="entry name" value="S_TKc"/>
    <property type="match status" value="1"/>
</dbReference>
<dbReference type="SUPFAM" id="SSF56112">
    <property type="entry name" value="Protein kinase-like (PK-like)"/>
    <property type="match status" value="1"/>
</dbReference>
<dbReference type="PROSITE" id="PS50011">
    <property type="entry name" value="PROTEIN_KINASE_DOM"/>
    <property type="match status" value="1"/>
</dbReference>
<dbReference type="PROSITE" id="PS00108">
    <property type="entry name" value="PROTEIN_KINASE_ST"/>
    <property type="match status" value="1"/>
</dbReference>
<name>MP2K7_HUMAN</name>
<reference key="1">
    <citation type="journal article" date="1997" name="Mol. Cell. Biol.">
        <title>Molecular cloning and characterization of human JNKK2, a novel jun NH2-terminal kinase-specific kinase.</title>
        <authorList>
            <person name="Wu Z."/>
            <person name="Wu J."/>
            <person name="Jacinto E."/>
            <person name="Karin M."/>
        </authorList>
    </citation>
    <scope>NUCLEOTIDE SEQUENCE [MRNA] (ISOFORM 1)</scope>
    <scope>FUNCTION</scope>
    <scope>TISSUE SPECIFICITY</scope>
    <source>
        <tissue>Heart</tissue>
        <tissue>Skeletal muscle</tissue>
    </source>
</reference>
<reference key="2">
    <citation type="journal article" date="1997" name="J. Biol. Chem.">
        <title>Identification of c-Jun NH2-terminal protein kinase (JNK)-activating kinase 2 as an activator of JNK but not p38.</title>
        <authorList>
            <person name="Lu X."/>
            <person name="Nemoto S."/>
            <person name="Lin A."/>
        </authorList>
    </citation>
    <scope>NUCLEOTIDE SEQUENCE [MRNA] (ISOFORM 1)</scope>
    <scope>FUNCTION</scope>
    <scope>ACTIVITY REGULATION</scope>
</reference>
<reference key="3">
    <citation type="journal article" date="1998" name="J. Biol. Chem.">
        <title>Human mitogen-activated protein kinase kinase 7 (MKK7) is a highly conserved c-Jun N-terminal kinase/stress-activated protein kinase (JNK/SAPK) activated by environmental stresses and physiological stimuli.</title>
        <authorList>
            <person name="Foltz I.N."/>
            <person name="Gerl R.E."/>
            <person name="Wieler J.S."/>
            <person name="Luckach M."/>
            <person name="Salmon R.A."/>
            <person name="Schrader J.W."/>
        </authorList>
    </citation>
    <scope>NUCLEOTIDE SEQUENCE [MRNA] (ISOFORMS 1 AND 2)</scope>
    <scope>FUNCTION</scope>
    <scope>TISSUE SPECIFICITY</scope>
    <scope>VARIANT PHE-259</scope>
    <source>
        <tissue>Fetal kidney</tissue>
    </source>
</reference>
<reference key="4">
    <citation type="journal article" date="2006" name="Biochem. Biophys. Res. Commun.">
        <title>Cloning and expression of human mitogen-activated protein kinase kinase 7gamma1.</title>
        <authorList>
            <person name="Michael L."/>
            <person name="Swantek J."/>
            <person name="Robinson M.J."/>
        </authorList>
    </citation>
    <scope>NUCLEOTIDE SEQUENCE [MRNA] (ISOFORM 3)</scope>
    <scope>ACTIVITY REGULATION</scope>
    <scope>TISSUE SPECIFICITY</scope>
</reference>
<reference key="5">
    <citation type="submission" date="1997-09" db="EMBL/GenBank/DDBJ databases">
        <title>Molecular cloning of human JNKK2 reveals a novel kinase module for c-Jun N-terminal kinase activation.</title>
        <authorList>
            <person name="Yang J."/>
            <person name="New L."/>
            <person name="Yong J."/>
            <person name="Han J."/>
            <person name="Su B."/>
        </authorList>
    </citation>
    <scope>NUCLEOTIDE SEQUENCE [MRNA] (ISOFORM 1)</scope>
    <scope>FUNCTION IN PHOSPHORYLATION OF MAPK8/JNK1 AND MAPK9/JNK2</scope>
</reference>
<reference key="6">
    <citation type="journal article" date="2004" name="Nat. Genet.">
        <title>Complete sequencing and characterization of 21,243 full-length human cDNAs.</title>
        <authorList>
            <person name="Ota T."/>
            <person name="Suzuki Y."/>
            <person name="Nishikawa T."/>
            <person name="Otsuki T."/>
            <person name="Sugiyama T."/>
            <person name="Irie R."/>
            <person name="Wakamatsu A."/>
            <person name="Hayashi K."/>
            <person name="Sato H."/>
            <person name="Nagai K."/>
            <person name="Kimura K."/>
            <person name="Makita H."/>
            <person name="Sekine M."/>
            <person name="Obayashi M."/>
            <person name="Nishi T."/>
            <person name="Shibahara T."/>
            <person name="Tanaka T."/>
            <person name="Ishii S."/>
            <person name="Yamamoto J."/>
            <person name="Saito K."/>
            <person name="Kawai Y."/>
            <person name="Isono Y."/>
            <person name="Nakamura Y."/>
            <person name="Nagahari K."/>
            <person name="Murakami K."/>
            <person name="Yasuda T."/>
            <person name="Iwayanagi T."/>
            <person name="Wagatsuma M."/>
            <person name="Shiratori A."/>
            <person name="Sudo H."/>
            <person name="Hosoiri T."/>
            <person name="Kaku Y."/>
            <person name="Kodaira H."/>
            <person name="Kondo H."/>
            <person name="Sugawara M."/>
            <person name="Takahashi M."/>
            <person name="Kanda K."/>
            <person name="Yokoi T."/>
            <person name="Furuya T."/>
            <person name="Kikkawa E."/>
            <person name="Omura Y."/>
            <person name="Abe K."/>
            <person name="Kamihara K."/>
            <person name="Katsuta N."/>
            <person name="Sato K."/>
            <person name="Tanikawa M."/>
            <person name="Yamazaki M."/>
            <person name="Ninomiya K."/>
            <person name="Ishibashi T."/>
            <person name="Yamashita H."/>
            <person name="Murakawa K."/>
            <person name="Fujimori K."/>
            <person name="Tanai H."/>
            <person name="Kimata M."/>
            <person name="Watanabe M."/>
            <person name="Hiraoka S."/>
            <person name="Chiba Y."/>
            <person name="Ishida S."/>
            <person name="Ono Y."/>
            <person name="Takiguchi S."/>
            <person name="Watanabe S."/>
            <person name="Yosida M."/>
            <person name="Hotuta T."/>
            <person name="Kusano J."/>
            <person name="Kanehori K."/>
            <person name="Takahashi-Fujii A."/>
            <person name="Hara H."/>
            <person name="Tanase T.-O."/>
            <person name="Nomura Y."/>
            <person name="Togiya S."/>
            <person name="Komai F."/>
            <person name="Hara R."/>
            <person name="Takeuchi K."/>
            <person name="Arita M."/>
            <person name="Imose N."/>
            <person name="Musashino K."/>
            <person name="Yuuki H."/>
            <person name="Oshima A."/>
            <person name="Sasaki N."/>
            <person name="Aotsuka S."/>
            <person name="Yoshikawa Y."/>
            <person name="Matsunawa H."/>
            <person name="Ichihara T."/>
            <person name="Shiohata N."/>
            <person name="Sano S."/>
            <person name="Moriya S."/>
            <person name="Momiyama H."/>
            <person name="Satoh N."/>
            <person name="Takami S."/>
            <person name="Terashima Y."/>
            <person name="Suzuki O."/>
            <person name="Nakagawa S."/>
            <person name="Senoh A."/>
            <person name="Mizoguchi H."/>
            <person name="Goto Y."/>
            <person name="Shimizu F."/>
            <person name="Wakebe H."/>
            <person name="Hishigaki H."/>
            <person name="Watanabe T."/>
            <person name="Sugiyama A."/>
            <person name="Takemoto M."/>
            <person name="Kawakami B."/>
            <person name="Yamazaki M."/>
            <person name="Watanabe K."/>
            <person name="Kumagai A."/>
            <person name="Itakura S."/>
            <person name="Fukuzumi Y."/>
            <person name="Fujimori Y."/>
            <person name="Komiyama M."/>
            <person name="Tashiro H."/>
            <person name="Tanigami A."/>
            <person name="Fujiwara T."/>
            <person name="Ono T."/>
            <person name="Yamada K."/>
            <person name="Fujii Y."/>
            <person name="Ozaki K."/>
            <person name="Hirao M."/>
            <person name="Ohmori Y."/>
            <person name="Kawabata A."/>
            <person name="Hikiji T."/>
            <person name="Kobatake N."/>
            <person name="Inagaki H."/>
            <person name="Ikema Y."/>
            <person name="Okamoto S."/>
            <person name="Okitani R."/>
            <person name="Kawakami T."/>
            <person name="Noguchi S."/>
            <person name="Itoh T."/>
            <person name="Shigeta K."/>
            <person name="Senba T."/>
            <person name="Matsumura K."/>
            <person name="Nakajima Y."/>
            <person name="Mizuno T."/>
            <person name="Morinaga M."/>
            <person name="Sasaki M."/>
            <person name="Togashi T."/>
            <person name="Oyama M."/>
            <person name="Hata H."/>
            <person name="Watanabe M."/>
            <person name="Komatsu T."/>
            <person name="Mizushima-Sugano J."/>
            <person name="Satoh T."/>
            <person name="Shirai Y."/>
            <person name="Takahashi Y."/>
            <person name="Nakagawa K."/>
            <person name="Okumura K."/>
            <person name="Nagase T."/>
            <person name="Nomura N."/>
            <person name="Kikuchi H."/>
            <person name="Masuho Y."/>
            <person name="Yamashita R."/>
            <person name="Nakai K."/>
            <person name="Yada T."/>
            <person name="Nakamura Y."/>
            <person name="Ohara O."/>
            <person name="Isogai T."/>
            <person name="Sugano S."/>
        </authorList>
    </citation>
    <scope>NUCLEOTIDE SEQUENCE [LARGE SCALE MRNA] (ISOFORM 1)</scope>
    <source>
        <tissue>Brain</tissue>
    </source>
</reference>
<reference key="7">
    <citation type="submission" date="2005-09" db="EMBL/GenBank/DDBJ databases">
        <authorList>
            <person name="Mural R.J."/>
            <person name="Istrail S."/>
            <person name="Sutton G.G."/>
            <person name="Florea L."/>
            <person name="Halpern A.L."/>
            <person name="Mobarry C.M."/>
            <person name="Lippert R."/>
            <person name="Walenz B."/>
            <person name="Shatkay H."/>
            <person name="Dew I."/>
            <person name="Miller J.R."/>
            <person name="Flanigan M.J."/>
            <person name="Edwards N.J."/>
            <person name="Bolanos R."/>
            <person name="Fasulo D."/>
            <person name="Halldorsson B.V."/>
            <person name="Hannenhalli S."/>
            <person name="Turner R."/>
            <person name="Yooseph S."/>
            <person name="Lu F."/>
            <person name="Nusskern D.R."/>
            <person name="Shue B.C."/>
            <person name="Zheng X.H."/>
            <person name="Zhong F."/>
            <person name="Delcher A.L."/>
            <person name="Huson D.H."/>
            <person name="Kravitz S.A."/>
            <person name="Mouchard L."/>
            <person name="Reinert K."/>
            <person name="Remington K.A."/>
            <person name="Clark A.G."/>
            <person name="Waterman M.S."/>
            <person name="Eichler E.E."/>
            <person name="Adams M.D."/>
            <person name="Hunkapiller M.W."/>
            <person name="Myers E.W."/>
            <person name="Venter J.C."/>
        </authorList>
    </citation>
    <scope>NUCLEOTIDE SEQUENCE [LARGE SCALE GENOMIC DNA]</scope>
</reference>
<reference key="8">
    <citation type="journal article" date="2004" name="Genome Res.">
        <title>The status, quality, and expansion of the NIH full-length cDNA project: the Mammalian Gene Collection (MGC).</title>
        <authorList>
            <consortium name="The MGC Project Team"/>
        </authorList>
    </citation>
    <scope>NUCLEOTIDE SEQUENCE [LARGE SCALE MRNA] (ISOFORM 4)</scope>
    <source>
        <tissue>Testis</tissue>
    </source>
</reference>
<reference key="9">
    <citation type="journal article" date="1997" name="Proc. Natl. Acad. Sci. U.S.A.">
        <title>Mitogen-activated protein kinase kinase 7 is an activator of the c-Jun NH2-terminal kinase.</title>
        <authorList>
            <person name="Tournier C."/>
            <person name="Whitmarsh A.J."/>
            <person name="Cavanagh J."/>
            <person name="Barrett T."/>
            <person name="Davis R.J."/>
        </authorList>
    </citation>
    <scope>NUCLEOTIDE SEQUENCE [MRNA] OF 1-260 (ISOFORMS 1/4)</scope>
</reference>
<reference key="10">
    <citation type="journal article" date="1999" name="Mol. Cell. Biol.">
        <title>The JIP group of mitogen-activated protein kinase scaffold proteins.</title>
        <authorList>
            <person name="Yasuda J."/>
            <person name="Whitmarsh A.J."/>
            <person name="Cavanagh J."/>
            <person name="Sharma M."/>
            <person name="Davis R.J."/>
        </authorList>
    </citation>
    <scope>INTERACTION WITH MAPK8IP1/JIP1 AND MAPK8IP2/JIP2</scope>
</reference>
<reference key="11">
    <citation type="journal article" date="2000" name="Biochem. J.">
        <title>Susceptibility of mitogen-activated protein kinase kinase family members to proteolysis by anthrax lethal factor.</title>
        <authorList>
            <person name="Vitale G."/>
            <person name="Bernardi L."/>
            <person name="Napolitani G."/>
            <person name="Mock M."/>
            <person name="Montecucco C."/>
        </authorList>
    </citation>
    <scope>CLEAVAGE BY ANTHRAX LETHAL FACTOR</scope>
</reference>
<reference key="12">
    <citation type="journal article" date="2002" name="J. Biol. Chem.">
        <title>Phosphorylation-dependent scaffolding role of JSAP1/JIP3 in the ASK1-JNK signaling pathway. A new mode of regulation of the MAP kinase cascade.</title>
        <authorList>
            <person name="Matsuura H."/>
            <person name="Nishitoh H."/>
            <person name="Takeda K."/>
            <person name="Matsuzawa A."/>
            <person name="Amagasa T."/>
            <person name="Ito M."/>
            <person name="Yoshioka K."/>
            <person name="Ichijo H."/>
        </authorList>
    </citation>
    <scope>INTERACTION WITH MAPK8IP3/JIP3</scope>
</reference>
<reference key="13">
    <citation type="journal article" date="2005" name="Mol. Cell">
        <title>Conserved docking site is essential for activation of mammalian MAP kinase kinases by specific MAP kinase kinase kinases.</title>
        <authorList>
            <person name="Takekawa M."/>
            <person name="Tatebayashi K."/>
            <person name="Saito H."/>
        </authorList>
    </citation>
    <scope>DOMAIN</scope>
</reference>
<reference key="14">
    <citation type="journal article" date="2008" name="PLoS ONE">
        <title>Modulation of interleukin-1 transcriptional response by the interaction between VRK2 and the JIP1 scaffold protein.</title>
        <authorList>
            <person name="Blanco S."/>
            <person name="Sanz-Garcia M."/>
            <person name="Santos C.R."/>
            <person name="Lazo P.A."/>
        </authorList>
    </citation>
    <scope>INTERACTION WITH VRK2</scope>
</reference>
<reference key="15">
    <citation type="journal article" date="2007" name="Oncogene">
        <title>Differential regulation and properties of MAPKs.</title>
        <authorList>
            <person name="Raman M."/>
            <person name="Chen W."/>
            <person name="Cobb M.H."/>
        </authorList>
    </citation>
    <scope>REVIEW ON ACTIVITY REGULATION</scope>
</reference>
<reference key="16">
    <citation type="journal article" date="2009" name="Anal. Chem.">
        <title>Lys-N and trypsin cover complementary parts of the phosphoproteome in a refined SCX-based approach.</title>
        <authorList>
            <person name="Gauci S."/>
            <person name="Helbig A.O."/>
            <person name="Slijper M."/>
            <person name="Krijgsveld J."/>
            <person name="Heck A.J."/>
            <person name="Mohammed S."/>
        </authorList>
    </citation>
    <scope>ACETYLATION [LARGE SCALE ANALYSIS] AT ALA-2</scope>
    <scope>CLEAVAGE OF INITIATOR METHIONINE [LARGE SCALE ANALYSIS]</scope>
    <scope>IDENTIFICATION BY MASS SPECTROMETRY [LARGE SCALE ANALYSIS]</scope>
</reference>
<reference key="17">
    <citation type="journal article" date="2010" name="J. Biochem.">
        <title>Diverse physiological functions of MKK4 and MKK7 during early embryogenesis.</title>
        <authorList>
            <person name="Asaoka Y."/>
            <person name="Nishina H."/>
        </authorList>
    </citation>
    <scope>REVIEW ON FUNCTION</scope>
</reference>
<reference key="18">
    <citation type="journal article" date="2011" name="Cell Death Differ.">
        <title>RASSF7 negatively regulates pro-apoptotic JNK signaling by inhibiting the activity of phosphorylated-MKK7.</title>
        <authorList>
            <person name="Takahashi S."/>
            <person name="Ebihara A."/>
            <person name="Kajiho H."/>
            <person name="Kontani K."/>
            <person name="Nishina H."/>
            <person name="Katada T."/>
        </authorList>
    </citation>
    <scope>INTERACTION WITH RASSF7</scope>
</reference>
<reference key="19">
    <citation type="journal article" date="2011" name="Eur. J. Cell Biol.">
        <title>The bottleneck of JNK signaling: molecular and functional characteristics of MKK4 and MKK7.</title>
        <authorList>
            <person name="Haeusgen W."/>
            <person name="Herdegen T."/>
            <person name="Waetzig V."/>
        </authorList>
    </citation>
    <scope>REVIEW ON REGULATION</scope>
    <scope>REVIEW ON FUNCTION</scope>
</reference>
<reference key="20">
    <citation type="journal article" date="2012" name="Proc. Natl. Acad. Sci. U.S.A.">
        <title>N-terminal acetylome analyses and functional insights of the N-terminal acetyltransferase NatB.</title>
        <authorList>
            <person name="Van Damme P."/>
            <person name="Lasa M."/>
            <person name="Polevoda B."/>
            <person name="Gazquez C."/>
            <person name="Elosegui-Artola A."/>
            <person name="Kim D.S."/>
            <person name="De Juan-Pardo E."/>
            <person name="Demeyer K."/>
            <person name="Hole K."/>
            <person name="Larrea E."/>
            <person name="Timmerman E."/>
            <person name="Prieto J."/>
            <person name="Arnesen T."/>
            <person name="Sherman F."/>
            <person name="Gevaert K."/>
            <person name="Aldabe R."/>
        </authorList>
    </citation>
    <scope>ACETYLATION [LARGE SCALE ANALYSIS] AT ALA-2</scope>
    <scope>CLEAVAGE OF INITIATOR METHIONINE [LARGE SCALE ANALYSIS]</scope>
    <scope>IDENTIFICATION BY MASS SPECTROMETRY [LARGE SCALE ANALYSIS]</scope>
</reference>
<reference key="21">
    <citation type="journal article" date="2013" name="J. Proteome Res.">
        <title>Toward a comprehensive characterization of a human cancer cell phosphoproteome.</title>
        <authorList>
            <person name="Zhou H."/>
            <person name="Di Palma S."/>
            <person name="Preisinger C."/>
            <person name="Peng M."/>
            <person name="Polat A.N."/>
            <person name="Heck A.J."/>
            <person name="Mohammed S."/>
        </authorList>
    </citation>
    <scope>PHOSPHORYLATION [LARGE SCALE ANALYSIS] AT SER-411</scope>
    <scope>IDENTIFICATION BY MASS SPECTROMETRY [LARGE SCALE ANALYSIS]</scope>
    <source>
        <tissue>Erythroleukemia</tissue>
    </source>
</reference>
<reference key="22">
    <citation type="journal article" date="2017" name="Cell">
        <title>ApoE2, ApoE3, and ApoE4 Differentially Stimulate APP Transcription and Abeta Secretion.</title>
        <authorList>
            <person name="Huang Y.A."/>
            <person name="Zhou B."/>
            <person name="Wernig M."/>
            <person name="Suedhof T.C."/>
        </authorList>
    </citation>
    <scope>FUNCTION</scope>
</reference>
<reference key="23">
    <citation type="submission" date="2009-02" db="PDB data bank">
        <title>Crystal structure of human mitogen-activated protein kinase kinase 7 activated mutant (s287d, t291d).</title>
        <authorList>
            <consortium name="RIKEN structural genomics initiative (RSGI)"/>
        </authorList>
    </citation>
    <scope>X-RAY CRYSTALLOGRAPHY (2.45 ANGSTROMS) OF 101-405</scope>
</reference>
<reference key="24">
    <citation type="journal article" date="2007" name="Nature">
        <title>Patterns of somatic mutation in human cancer genomes.</title>
        <authorList>
            <person name="Greenman C."/>
            <person name="Stephens P."/>
            <person name="Smith R."/>
            <person name="Dalgliesh G.L."/>
            <person name="Hunter C."/>
            <person name="Bignell G."/>
            <person name="Davies H."/>
            <person name="Teague J."/>
            <person name="Butler A."/>
            <person name="Stevens C."/>
            <person name="Edkins S."/>
            <person name="O'Meara S."/>
            <person name="Vastrik I."/>
            <person name="Schmidt E.E."/>
            <person name="Avis T."/>
            <person name="Barthorpe S."/>
            <person name="Bhamra G."/>
            <person name="Buck G."/>
            <person name="Choudhury B."/>
            <person name="Clements J."/>
            <person name="Cole J."/>
            <person name="Dicks E."/>
            <person name="Forbes S."/>
            <person name="Gray K."/>
            <person name="Halliday K."/>
            <person name="Harrison R."/>
            <person name="Hills K."/>
            <person name="Hinton J."/>
            <person name="Jenkinson A."/>
            <person name="Jones D."/>
            <person name="Menzies A."/>
            <person name="Mironenko T."/>
            <person name="Perry J."/>
            <person name="Raine K."/>
            <person name="Richardson D."/>
            <person name="Shepherd R."/>
            <person name="Small A."/>
            <person name="Tofts C."/>
            <person name="Varian J."/>
            <person name="Webb T."/>
            <person name="West S."/>
            <person name="Widaa S."/>
            <person name="Yates A."/>
            <person name="Cahill D.P."/>
            <person name="Louis D.N."/>
            <person name="Goldstraw P."/>
            <person name="Nicholson A.G."/>
            <person name="Brasseur F."/>
            <person name="Looijenga L."/>
            <person name="Weber B.L."/>
            <person name="Chiew Y.-E."/>
            <person name="DeFazio A."/>
            <person name="Greaves M.F."/>
            <person name="Green A.R."/>
            <person name="Campbell P."/>
            <person name="Birney E."/>
            <person name="Easton D.F."/>
            <person name="Chenevix-Trench G."/>
            <person name="Tan M.-H."/>
            <person name="Khoo S.K."/>
            <person name="Teh B.T."/>
            <person name="Yuen S.T."/>
            <person name="Leung S.Y."/>
            <person name="Wooster R."/>
            <person name="Futreal P.A."/>
            <person name="Stratton M.R."/>
        </authorList>
    </citation>
    <scope>VARIANTS [LARGE SCALE ANALYSIS] SER-118; CYS-138; CYS-162; HIS-162 AND THR-195</scope>
</reference>
<accession>O14733</accession>
<accession>B2R9S5</accession>
<accession>D6W659</accession>
<accession>O14648</accession>
<accession>O14816</accession>
<accession>O60452</accession>
<accession>O60453</accession>
<accession>Q1PG43</accession>
<accession>Q8IY10</accession>
<sequence length="419" mass="47485">MAASSLEQKLSRLEAKLKQENREARRRIDLNLDISPQRPRPTLQLPLANDGGSRSPSSESSPQHPTPPARPRHMLGLPSTLFTPRSMESIEIDQKLQEIMKQTGYLTIGGQRYQAEINDLENLGEMGSGTCGQVWKMRFRKTGHVIAVKQMRRSGNKEENKRILMDLDVVLKSHDCPYIVQCFGTFITNTDVFIAMELMGTCAEKLKKRMQGPIPERILGKMTVAIVKALYYLKEKHGVIHRDVKPSNILLDERGQIKLCDFGISGRLVDSKAKTRSAGCAAYMAPERIDPPDPTKPDYDIRADVWSLGISLVELATGQFPYKNCKTDFEVLTKVLQEEPPLLPGHMGFSGDFQSFVKDCLTKDHRKRPKYNKLLEHSFIKRYETLEVDVASWFKDVMAKTESPRTSGVLSQPHLPFFR</sequence>